<reference key="1">
    <citation type="journal article" date="2009" name="Nature">
        <title>Genome sequence and analysis of the Irish potato famine pathogen Phytophthora infestans.</title>
        <authorList>
            <consortium name="The Broad Institute Genome Sequencing Platform"/>
            <person name="Haas B.J."/>
            <person name="Kamoun S."/>
            <person name="Zody M.C."/>
            <person name="Jiang R.H."/>
            <person name="Handsaker R.E."/>
            <person name="Cano L.M."/>
            <person name="Grabherr M."/>
            <person name="Kodira C.D."/>
            <person name="Raffaele S."/>
            <person name="Torto-Alalibo T."/>
            <person name="Bozkurt T.O."/>
            <person name="Ah-Fong A.M."/>
            <person name="Alvarado L."/>
            <person name="Anderson V.L."/>
            <person name="Armstrong M.R."/>
            <person name="Avrova A."/>
            <person name="Baxter L."/>
            <person name="Beynon J."/>
            <person name="Boevink P.C."/>
            <person name="Bollmann S.R."/>
            <person name="Bos J.I."/>
            <person name="Bulone V."/>
            <person name="Cai G."/>
            <person name="Cakir C."/>
            <person name="Carrington J.C."/>
            <person name="Chawner M."/>
            <person name="Conti L."/>
            <person name="Costanzo S."/>
            <person name="Ewan R."/>
            <person name="Fahlgren N."/>
            <person name="Fischbach M.A."/>
            <person name="Fugelstad J."/>
            <person name="Gilroy E.M."/>
            <person name="Gnerre S."/>
            <person name="Green P.J."/>
            <person name="Grenville-Briggs L.J."/>
            <person name="Griffith J."/>
            <person name="Grunwald N.J."/>
            <person name="Horn K."/>
            <person name="Horner N.R."/>
            <person name="Hu C.H."/>
            <person name="Huitema E."/>
            <person name="Jeong D.H."/>
            <person name="Jones A.M."/>
            <person name="Jones J.D."/>
            <person name="Jones R.W."/>
            <person name="Karlsson E.K."/>
            <person name="Kunjeti S.G."/>
            <person name="Lamour K."/>
            <person name="Liu Z."/>
            <person name="Ma L."/>
            <person name="Maclean D."/>
            <person name="Chibucos M.C."/>
            <person name="McDonald H."/>
            <person name="McWalters J."/>
            <person name="Meijer H.J."/>
            <person name="Morgan W."/>
            <person name="Morris P.F."/>
            <person name="Munro C.A."/>
            <person name="O'Neill K."/>
            <person name="Ospina-Giraldo M."/>
            <person name="Pinzon A."/>
            <person name="Pritchard L."/>
            <person name="Ramsahoye B."/>
            <person name="Ren Q."/>
            <person name="Restrepo S."/>
            <person name="Roy S."/>
            <person name="Sadanandom A."/>
            <person name="Savidor A."/>
            <person name="Schornack S."/>
            <person name="Schwartz D.C."/>
            <person name="Schumann U.D."/>
            <person name="Schwessinger B."/>
            <person name="Seyer L."/>
            <person name="Sharpe T."/>
            <person name="Silvar C."/>
            <person name="Song J."/>
            <person name="Studholme D.J."/>
            <person name="Sykes S."/>
            <person name="Thines M."/>
            <person name="van de Vondervoort P.J."/>
            <person name="Phuntumart V."/>
            <person name="Wawra S."/>
            <person name="Weide R."/>
            <person name="Win J."/>
            <person name="Young C."/>
            <person name="Zhou S."/>
            <person name="Fry W."/>
            <person name="Meyers B.C."/>
            <person name="van West P."/>
            <person name="Ristaino J."/>
            <person name="Govers F."/>
            <person name="Birch P.R."/>
            <person name="Whisson S.C."/>
            <person name="Judelson H.S."/>
            <person name="Nusbaum C."/>
        </authorList>
    </citation>
    <scope>NUCLEOTIDE SEQUENCE [LARGE SCALE GENOMIC DNA]</scope>
    <scope>INDUCTION</scope>
    <source>
        <strain>T30-4</strain>
    </source>
</reference>
<reference key="2">
    <citation type="journal article" date="2017" name="BMC Genomics">
        <title>RNA-seq of life stages of the oomycete Phytophthora infestans reveals dynamic changes in metabolic, signal transduction, and pathogenesis genes and a major role for calcium signaling in development.</title>
        <authorList>
            <person name="Ah-Fong A.M."/>
            <person name="Kim K.S."/>
            <person name="Judelson H.S."/>
        </authorList>
    </citation>
    <scope>INDUCTION</scope>
</reference>
<reference key="3">
    <citation type="journal article" date="2017" name="Front. Plant Sci.">
        <title>Conserved RXLR effector genes of Phytophthora infestans expressed at the early stage of potato infection are suppressive to host defense.</title>
        <authorList>
            <person name="Yin J."/>
            <person name="Gu B."/>
            <person name="Huang G."/>
            <person name="Tian Y."/>
            <person name="Quan J."/>
            <person name="Lindqvist-Kreuze H."/>
            <person name="Shan W."/>
        </authorList>
    </citation>
    <scope>INDUCTION</scope>
    <scope>DOMAIN</scope>
</reference>
<reference key="4">
    <citation type="journal article" date="2019" name="J. Exp. Bot.">
        <title>Phytophthora infestans RXLR effectors act in concert at diverse subcellular locations to enhance host colonization.</title>
        <authorList>
            <person name="Wang S."/>
            <person name="McLellan H."/>
            <person name="Bukharova T."/>
            <person name="He Q."/>
            <person name="Murphy F."/>
            <person name="Shi J."/>
            <person name="Sun S."/>
            <person name="van Weymers P."/>
            <person name="Ren Y."/>
            <person name="Thilliez G."/>
            <person name="Wang H."/>
            <person name="Chen X."/>
            <person name="Engelhardt S."/>
            <person name="Vleeshouwers V."/>
            <person name="Gilroy E.M."/>
            <person name="Whisson S.C."/>
            <person name="Hein I."/>
            <person name="Wang X."/>
            <person name="Tian Z."/>
            <person name="Birch P.R.J."/>
            <person name="Boevink P.C."/>
        </authorList>
    </citation>
    <scope>SUBCELLULAR LOCATION</scope>
</reference>
<sequence>MRLIAGVLAGFLVICEVTSTSESDRTMAYQTADTDNTQPTGAVENSIASKQFLRTDVVMNRGEERGFEALKKLLPGTKIVAKDGASFSGAFVRKMLGNNAFRNQEFKRWTRSDLDGTALRQMLGDMNKKGRTELLNRYTAFLGPKDGLVYHKPGPIV</sequence>
<comment type="function">
    <text evidence="9">Effector that might be involved in host plant infection.</text>
</comment>
<comment type="subcellular location">
    <subcellularLocation>
        <location evidence="5">Secreted</location>
    </subcellularLocation>
    <subcellularLocation>
        <location evidence="5">Host cytoplasm</location>
    </subcellularLocation>
    <subcellularLocation>
        <location evidence="5">Host nucleus</location>
    </subcellularLocation>
    <text evidence="5">Associates with small mobile bodies.</text>
</comment>
<comment type="induction">
    <text evidence="2 3 4">Expression is induced during host plant infection.</text>
</comment>
<comment type="domain">
    <text evidence="8">The RxLR-dEER motif acts to carry the protein into the host cell cytoplasm through binding to cell surface phosphatidylinositol-3-phosphate.</text>
</comment>
<comment type="similarity">
    <text evidence="7">Belongs to the RxLR effector family.</text>
</comment>
<organism>
    <name type="scientific">Phytophthora infestans (strain T30-4)</name>
    <name type="common">Potato late blight agent</name>
    <dbReference type="NCBI Taxonomy" id="403677"/>
    <lineage>
        <taxon>Eukaryota</taxon>
        <taxon>Sar</taxon>
        <taxon>Stramenopiles</taxon>
        <taxon>Oomycota</taxon>
        <taxon>Peronosporales</taxon>
        <taxon>Peronosporaceae</taxon>
        <taxon>Phytophthora</taxon>
    </lineage>
</organism>
<dbReference type="EMBL" id="DS028122">
    <property type="protein sequence ID" value="EEY67115.1"/>
    <property type="molecule type" value="Genomic_DNA"/>
</dbReference>
<dbReference type="RefSeq" id="XP_002905763.1">
    <property type="nucleotide sequence ID" value="XM_002905717.1"/>
</dbReference>
<dbReference type="EnsemblProtists" id="PITG_04049T0">
    <property type="protein sequence ID" value="PITG_04049T0"/>
    <property type="gene ID" value="PITG_04049"/>
</dbReference>
<dbReference type="GeneID" id="9479388"/>
<dbReference type="KEGG" id="pif:PITG_04049"/>
<dbReference type="VEuPathDB" id="FungiDB:PITG_04049"/>
<dbReference type="eggNOG" id="ENOG502RH3D">
    <property type="taxonomic scope" value="Eukaryota"/>
</dbReference>
<dbReference type="HOGENOM" id="CLU_1681369_0_0_1"/>
<dbReference type="InParanoid" id="D0N0F2"/>
<dbReference type="OMA" id="VFEDWTR"/>
<dbReference type="OrthoDB" id="109022at2759"/>
<dbReference type="Proteomes" id="UP000006643">
    <property type="component" value="Partially assembled WGS sequence"/>
</dbReference>
<dbReference type="GO" id="GO:0005576">
    <property type="term" value="C:extracellular region"/>
    <property type="evidence" value="ECO:0007669"/>
    <property type="project" value="UniProtKB-SubCell"/>
</dbReference>
<dbReference type="GO" id="GO:0030430">
    <property type="term" value="C:host cell cytoplasm"/>
    <property type="evidence" value="ECO:0007669"/>
    <property type="project" value="UniProtKB-SubCell"/>
</dbReference>
<dbReference type="GO" id="GO:0042025">
    <property type="term" value="C:host cell nucleus"/>
    <property type="evidence" value="ECO:0007669"/>
    <property type="project" value="UniProtKB-SubCell"/>
</dbReference>
<dbReference type="InterPro" id="IPR031825">
    <property type="entry name" value="RXLR"/>
</dbReference>
<dbReference type="Pfam" id="PF16810">
    <property type="entry name" value="RXLR"/>
    <property type="match status" value="1"/>
</dbReference>
<proteinExistence type="evidence at transcript level"/>
<feature type="signal peptide" evidence="1">
    <location>
        <begin position="1"/>
        <end position="23"/>
    </location>
</feature>
<feature type="chain" id="PRO_5003012739" description="RxLR effector protein PITG_04049">
    <location>
        <begin position="24"/>
        <end position="157"/>
    </location>
</feature>
<feature type="short sequence motif" description="RxLR-dEER" evidence="8">
    <location>
        <begin position="51"/>
        <end position="65"/>
    </location>
</feature>
<gene>
    <name type="ORF">PITG_04049</name>
</gene>
<name>RXLRE_PHYIT</name>
<evidence type="ECO:0000255" key="1"/>
<evidence type="ECO:0000269" key="2">
    <source>
    </source>
</evidence>
<evidence type="ECO:0000269" key="3">
    <source>
    </source>
</evidence>
<evidence type="ECO:0000269" key="4">
    <source>
    </source>
</evidence>
<evidence type="ECO:0000269" key="5">
    <source>
    </source>
</evidence>
<evidence type="ECO:0000303" key="6">
    <source>
    </source>
</evidence>
<evidence type="ECO:0000305" key="7"/>
<evidence type="ECO:0000305" key="8">
    <source>
    </source>
</evidence>
<evidence type="ECO:0000305" key="9">
    <source>
    </source>
</evidence>
<accession>D0N0F2</accession>
<protein>
    <recommendedName>
        <fullName evidence="6">RxLR effector protein PITG_04049</fullName>
    </recommendedName>
</protein>
<keyword id="KW-1035">Host cytoplasm</keyword>
<keyword id="KW-1048">Host nucleus</keyword>
<keyword id="KW-1185">Reference proteome</keyword>
<keyword id="KW-0964">Secreted</keyword>
<keyword id="KW-0732">Signal</keyword>
<keyword id="KW-0843">Virulence</keyword>